<keyword id="KW-1185">Reference proteome</keyword>
<accession>Q54HJ9</accession>
<reference key="1">
    <citation type="journal article" date="2005" name="Nature">
        <title>The genome of the social amoeba Dictyostelium discoideum.</title>
        <authorList>
            <person name="Eichinger L."/>
            <person name="Pachebat J.A."/>
            <person name="Gloeckner G."/>
            <person name="Rajandream M.A."/>
            <person name="Sucgang R."/>
            <person name="Berriman M."/>
            <person name="Song J."/>
            <person name="Olsen R."/>
            <person name="Szafranski K."/>
            <person name="Xu Q."/>
            <person name="Tunggal B."/>
            <person name="Kummerfeld S."/>
            <person name="Madera M."/>
            <person name="Konfortov B.A."/>
            <person name="Rivero F."/>
            <person name="Bankier A.T."/>
            <person name="Lehmann R."/>
            <person name="Hamlin N."/>
            <person name="Davies R."/>
            <person name="Gaudet P."/>
            <person name="Fey P."/>
            <person name="Pilcher K."/>
            <person name="Chen G."/>
            <person name="Saunders D."/>
            <person name="Sodergren E.J."/>
            <person name="Davis P."/>
            <person name="Kerhornou A."/>
            <person name="Nie X."/>
            <person name="Hall N."/>
            <person name="Anjard C."/>
            <person name="Hemphill L."/>
            <person name="Bason N."/>
            <person name="Farbrother P."/>
            <person name="Desany B."/>
            <person name="Just E."/>
            <person name="Morio T."/>
            <person name="Rost R."/>
            <person name="Churcher C.M."/>
            <person name="Cooper J."/>
            <person name="Haydock S."/>
            <person name="van Driessche N."/>
            <person name="Cronin A."/>
            <person name="Goodhead I."/>
            <person name="Muzny D.M."/>
            <person name="Mourier T."/>
            <person name="Pain A."/>
            <person name="Lu M."/>
            <person name="Harper D."/>
            <person name="Lindsay R."/>
            <person name="Hauser H."/>
            <person name="James K.D."/>
            <person name="Quiles M."/>
            <person name="Madan Babu M."/>
            <person name="Saito T."/>
            <person name="Buchrieser C."/>
            <person name="Wardroper A."/>
            <person name="Felder M."/>
            <person name="Thangavelu M."/>
            <person name="Johnson D."/>
            <person name="Knights A."/>
            <person name="Loulseged H."/>
            <person name="Mungall K.L."/>
            <person name="Oliver K."/>
            <person name="Price C."/>
            <person name="Quail M.A."/>
            <person name="Urushihara H."/>
            <person name="Hernandez J."/>
            <person name="Rabbinowitsch E."/>
            <person name="Steffen D."/>
            <person name="Sanders M."/>
            <person name="Ma J."/>
            <person name="Kohara Y."/>
            <person name="Sharp S."/>
            <person name="Simmonds M.N."/>
            <person name="Spiegler S."/>
            <person name="Tivey A."/>
            <person name="Sugano S."/>
            <person name="White B."/>
            <person name="Walker D."/>
            <person name="Woodward J.R."/>
            <person name="Winckler T."/>
            <person name="Tanaka Y."/>
            <person name="Shaulsky G."/>
            <person name="Schleicher M."/>
            <person name="Weinstock G.M."/>
            <person name="Rosenthal A."/>
            <person name="Cox E.C."/>
            <person name="Chisholm R.L."/>
            <person name="Gibbs R.A."/>
            <person name="Loomis W.F."/>
            <person name="Platzer M."/>
            <person name="Kay R.R."/>
            <person name="Williams J.G."/>
            <person name="Dear P.H."/>
            <person name="Noegel A.A."/>
            <person name="Barrell B.G."/>
            <person name="Kuspa A."/>
        </authorList>
    </citation>
    <scope>NUCLEOTIDE SEQUENCE [LARGE SCALE GENOMIC DNA]</scope>
    <source>
        <strain>AX4</strain>
    </source>
</reference>
<proteinExistence type="predicted"/>
<feature type="chain" id="PRO_0000346948" description="Uncharacterized protein DDB_G0289437">
    <location>
        <begin position="1"/>
        <end position="139"/>
    </location>
</feature>
<organism>
    <name type="scientific">Dictyostelium discoideum</name>
    <name type="common">Social amoeba</name>
    <dbReference type="NCBI Taxonomy" id="44689"/>
    <lineage>
        <taxon>Eukaryota</taxon>
        <taxon>Amoebozoa</taxon>
        <taxon>Evosea</taxon>
        <taxon>Eumycetozoa</taxon>
        <taxon>Dictyostelia</taxon>
        <taxon>Dictyosteliales</taxon>
        <taxon>Dictyosteliaceae</taxon>
        <taxon>Dictyostelium</taxon>
    </lineage>
</organism>
<gene>
    <name type="ORF">DDB_G0289437</name>
</gene>
<protein>
    <recommendedName>
        <fullName>Uncharacterized protein DDB_G0289437</fullName>
    </recommendedName>
</protein>
<dbReference type="EMBL" id="AAFI02000140">
    <property type="protein sequence ID" value="EAL62746.1"/>
    <property type="molecule type" value="Genomic_DNA"/>
</dbReference>
<dbReference type="RefSeq" id="XP_636234.1">
    <property type="nucleotide sequence ID" value="XM_631142.1"/>
</dbReference>
<dbReference type="PaxDb" id="44689-DDB0219435"/>
<dbReference type="EnsemblProtists" id="EAL62746">
    <property type="protein sequence ID" value="EAL62746"/>
    <property type="gene ID" value="DDB_G0289437"/>
</dbReference>
<dbReference type="GeneID" id="8627123"/>
<dbReference type="KEGG" id="ddi:DDB_G0289437"/>
<dbReference type="dictyBase" id="DDB_G0289437"/>
<dbReference type="VEuPathDB" id="AmoebaDB:DDB_G0289437"/>
<dbReference type="HOGENOM" id="CLU_1848820_0_0_1"/>
<dbReference type="InParanoid" id="Q54HJ9"/>
<dbReference type="PRO" id="PR:Q54HJ9"/>
<dbReference type="Proteomes" id="UP000002195">
    <property type="component" value="Chromosome 5"/>
</dbReference>
<sequence>MVKNGVLYLHLENIYQITIYKELPLEQKKLVDLGSLANWDIILLTKVLQAPYTKLNKSKLDIENKELLKIRLNYIKYENNLICKLEFDRDDDDLKELFKDKQVDSTLEVEKKVNKFKDIGNQYFTKKDYPEAVESYELA</sequence>
<name>Y9435_DICDI</name>